<sequence>MDAPHSKAALDSINELPENILLELFTHVPARQLLLNCRLVCSLWRDLIDLMTLWKRKCLREGFITKDWDQPVADWKIFYFLRSLHRNLLRNPCAEEDMFAWQIDFNGGDRWKVESLPGAHGTDFPDPKVKKYFVTSYEMCLKSQLVDLVAEGYWEELLDTFRPDIVVKDWFAARADCGCTYQLKVQLASADYFVLASFEPPPVTIQQWNNATWTEVSYTFSDYPRGVRYILFQHGGRDTQYWAGWYGPRVTNSSIVVSPKMTRNQASSEAQPGQKHGQEEAAQSPYRAVVQIF</sequence>
<feature type="chain" id="PRO_0000119882" description="F-box only protein 6">
    <location>
        <begin position="1"/>
        <end position="293"/>
    </location>
</feature>
<feature type="domain" description="F-box" evidence="2">
    <location>
        <begin position="10"/>
        <end position="57"/>
    </location>
</feature>
<feature type="domain" description="FBA" evidence="3">
    <location>
        <begin position="78"/>
        <end position="259"/>
    </location>
</feature>
<feature type="region of interest" description="Disordered" evidence="4">
    <location>
        <begin position="261"/>
        <end position="285"/>
    </location>
</feature>
<feature type="compositionally biased region" description="Polar residues" evidence="4">
    <location>
        <begin position="261"/>
        <end position="271"/>
    </location>
</feature>
<feature type="modified residue" description="Phosphoserine" evidence="8">
    <location>
        <position position="258"/>
    </location>
</feature>
<feature type="modified residue" description="Phosphoserine" evidence="8">
    <location>
        <position position="284"/>
    </location>
</feature>
<feature type="sequence variant" id="VAR_049039" description="In dbSNP:rs3125818.">
    <original>R</original>
    <variation>Q</variation>
    <location>
        <position position="60"/>
    </location>
</feature>
<feature type="sequence variant" id="VAR_022158" description="In dbSNP:rs2294639.">
    <original>P</original>
    <variation>T</variation>
    <location>
        <position position="201"/>
    </location>
</feature>
<feature type="mutagenesis site" description="Abolishes interaction with glycosylated concanavalin-A in vitro." evidence="5">
    <original>YW</original>
    <variation>AA</variation>
    <location>
        <begin position="241"/>
        <end position="242"/>
    </location>
</feature>
<feature type="sequence conflict" description="In Ref. 1; AAF04470." evidence="7" ref="1">
    <original>E</original>
    <variation>D</variation>
    <location>
        <position position="18"/>
    </location>
</feature>
<feature type="sequence conflict" description="In Ref. 1; AAF04470." evidence="7" ref="1">
    <original>M</original>
    <variation>L</variation>
    <location>
        <position position="51"/>
    </location>
</feature>
<feature type="sequence conflict" description="In Ref. 1; AAF04470." evidence="7" ref="1">
    <original>E</original>
    <variation>K</variation>
    <location>
        <position position="61"/>
    </location>
</feature>
<feature type="sequence conflict" description="In Ref. 1; AAF04470." evidence="7" ref="1">
    <original>E</original>
    <variation>N</variation>
    <location>
        <position position="96"/>
    </location>
</feature>
<feature type="sequence conflict" description="In Ref. 1; AAF04470." evidence="7" ref="1">
    <original>E</original>
    <variation>D</variation>
    <location>
        <position position="114"/>
    </location>
</feature>
<feature type="sequence conflict" description="In Ref. 1; AAF04470." evidence="7" ref="1">
    <original>D</original>
    <variation>E</variation>
    <location>
        <position position="123"/>
    </location>
</feature>
<feature type="sequence conflict" description="In Ref. 1; AAF04470." evidence="7" ref="1">
    <original>Y</original>
    <variation>S</variation>
    <location>
        <position position="132"/>
    </location>
</feature>
<feature type="sequence conflict" description="In Ref. 1; AAF04470." evidence="7" ref="1">
    <original>M</original>
    <variation>L</variation>
    <location>
        <position position="139"/>
    </location>
</feature>
<feature type="sequence conflict" description="In Ref. 1; AAF04470." evidence="7" ref="1">
    <original>SQ</original>
    <variation>WE</variation>
    <location>
        <begin position="143"/>
        <end position="144"/>
    </location>
</feature>
<feature type="sequence conflict" description="In Ref. 1; AAF04470." evidence="7" ref="1">
    <original>VAEG</original>
    <variation>LADR</variation>
    <location>
        <begin position="149"/>
        <end position="152"/>
    </location>
</feature>
<feature type="sequence conflict" description="In Ref. 1; AAF04470." evidence="7" ref="1">
    <original>R</original>
    <variation>G</variation>
    <location>
        <position position="287"/>
    </location>
</feature>
<reference key="1">
    <citation type="journal article" date="1999" name="Curr. Biol.">
        <title>Identification of a family of human F-box proteins.</title>
        <authorList>
            <person name="Cenciarelli C."/>
            <person name="Chiaur D.S."/>
            <person name="Guardavaccaro D."/>
            <person name="Parks W."/>
            <person name="Vidal M."/>
            <person name="Pagano M."/>
        </authorList>
    </citation>
    <scope>NUCLEOTIDE SEQUENCE [MRNA]</scope>
</reference>
<reference key="2">
    <citation type="journal article" date="2000" name="Genomics">
        <title>cDNA cloning and expression analysis of new members of the mammalian F-box protein family.</title>
        <authorList>
            <person name="Ilyin G.P."/>
            <person name="Rialland M."/>
            <person name="Pigeon C."/>
            <person name="Guguen-Guillouzo C."/>
        </authorList>
    </citation>
    <scope>NUCLEOTIDE SEQUENCE [MRNA]</scope>
</reference>
<reference key="3">
    <citation type="journal article" date="2004" name="Nat. Genet.">
        <title>Complete sequencing and characterization of 21,243 full-length human cDNAs.</title>
        <authorList>
            <person name="Ota T."/>
            <person name="Suzuki Y."/>
            <person name="Nishikawa T."/>
            <person name="Otsuki T."/>
            <person name="Sugiyama T."/>
            <person name="Irie R."/>
            <person name="Wakamatsu A."/>
            <person name="Hayashi K."/>
            <person name="Sato H."/>
            <person name="Nagai K."/>
            <person name="Kimura K."/>
            <person name="Makita H."/>
            <person name="Sekine M."/>
            <person name="Obayashi M."/>
            <person name="Nishi T."/>
            <person name="Shibahara T."/>
            <person name="Tanaka T."/>
            <person name="Ishii S."/>
            <person name="Yamamoto J."/>
            <person name="Saito K."/>
            <person name="Kawai Y."/>
            <person name="Isono Y."/>
            <person name="Nakamura Y."/>
            <person name="Nagahari K."/>
            <person name="Murakami K."/>
            <person name="Yasuda T."/>
            <person name="Iwayanagi T."/>
            <person name="Wagatsuma M."/>
            <person name="Shiratori A."/>
            <person name="Sudo H."/>
            <person name="Hosoiri T."/>
            <person name="Kaku Y."/>
            <person name="Kodaira H."/>
            <person name="Kondo H."/>
            <person name="Sugawara M."/>
            <person name="Takahashi M."/>
            <person name="Kanda K."/>
            <person name="Yokoi T."/>
            <person name="Furuya T."/>
            <person name="Kikkawa E."/>
            <person name="Omura Y."/>
            <person name="Abe K."/>
            <person name="Kamihara K."/>
            <person name="Katsuta N."/>
            <person name="Sato K."/>
            <person name="Tanikawa M."/>
            <person name="Yamazaki M."/>
            <person name="Ninomiya K."/>
            <person name="Ishibashi T."/>
            <person name="Yamashita H."/>
            <person name="Murakawa K."/>
            <person name="Fujimori K."/>
            <person name="Tanai H."/>
            <person name="Kimata M."/>
            <person name="Watanabe M."/>
            <person name="Hiraoka S."/>
            <person name="Chiba Y."/>
            <person name="Ishida S."/>
            <person name="Ono Y."/>
            <person name="Takiguchi S."/>
            <person name="Watanabe S."/>
            <person name="Yosida M."/>
            <person name="Hotuta T."/>
            <person name="Kusano J."/>
            <person name="Kanehori K."/>
            <person name="Takahashi-Fujii A."/>
            <person name="Hara H."/>
            <person name="Tanase T.-O."/>
            <person name="Nomura Y."/>
            <person name="Togiya S."/>
            <person name="Komai F."/>
            <person name="Hara R."/>
            <person name="Takeuchi K."/>
            <person name="Arita M."/>
            <person name="Imose N."/>
            <person name="Musashino K."/>
            <person name="Yuuki H."/>
            <person name="Oshima A."/>
            <person name="Sasaki N."/>
            <person name="Aotsuka S."/>
            <person name="Yoshikawa Y."/>
            <person name="Matsunawa H."/>
            <person name="Ichihara T."/>
            <person name="Shiohata N."/>
            <person name="Sano S."/>
            <person name="Moriya S."/>
            <person name="Momiyama H."/>
            <person name="Satoh N."/>
            <person name="Takami S."/>
            <person name="Terashima Y."/>
            <person name="Suzuki O."/>
            <person name="Nakagawa S."/>
            <person name="Senoh A."/>
            <person name="Mizoguchi H."/>
            <person name="Goto Y."/>
            <person name="Shimizu F."/>
            <person name="Wakebe H."/>
            <person name="Hishigaki H."/>
            <person name="Watanabe T."/>
            <person name="Sugiyama A."/>
            <person name="Takemoto M."/>
            <person name="Kawakami B."/>
            <person name="Yamazaki M."/>
            <person name="Watanabe K."/>
            <person name="Kumagai A."/>
            <person name="Itakura S."/>
            <person name="Fukuzumi Y."/>
            <person name="Fujimori Y."/>
            <person name="Komiyama M."/>
            <person name="Tashiro H."/>
            <person name="Tanigami A."/>
            <person name="Fujiwara T."/>
            <person name="Ono T."/>
            <person name="Yamada K."/>
            <person name="Fujii Y."/>
            <person name="Ozaki K."/>
            <person name="Hirao M."/>
            <person name="Ohmori Y."/>
            <person name="Kawabata A."/>
            <person name="Hikiji T."/>
            <person name="Kobatake N."/>
            <person name="Inagaki H."/>
            <person name="Ikema Y."/>
            <person name="Okamoto S."/>
            <person name="Okitani R."/>
            <person name="Kawakami T."/>
            <person name="Noguchi S."/>
            <person name="Itoh T."/>
            <person name="Shigeta K."/>
            <person name="Senba T."/>
            <person name="Matsumura K."/>
            <person name="Nakajima Y."/>
            <person name="Mizuno T."/>
            <person name="Morinaga M."/>
            <person name="Sasaki M."/>
            <person name="Togashi T."/>
            <person name="Oyama M."/>
            <person name="Hata H."/>
            <person name="Watanabe M."/>
            <person name="Komatsu T."/>
            <person name="Mizushima-Sugano J."/>
            <person name="Satoh T."/>
            <person name="Shirai Y."/>
            <person name="Takahashi Y."/>
            <person name="Nakagawa K."/>
            <person name="Okumura K."/>
            <person name="Nagase T."/>
            <person name="Nomura N."/>
            <person name="Kikuchi H."/>
            <person name="Masuho Y."/>
            <person name="Yamashita R."/>
            <person name="Nakai K."/>
            <person name="Yada T."/>
            <person name="Nakamura Y."/>
            <person name="Ohara O."/>
            <person name="Isogai T."/>
            <person name="Sugano S."/>
        </authorList>
    </citation>
    <scope>NUCLEOTIDE SEQUENCE [LARGE SCALE MRNA]</scope>
    <source>
        <tissue>Lung</tissue>
    </source>
</reference>
<reference key="4">
    <citation type="journal article" date="2006" name="Nature">
        <title>The DNA sequence and biological annotation of human chromosome 1.</title>
        <authorList>
            <person name="Gregory S.G."/>
            <person name="Barlow K.F."/>
            <person name="McLay K.E."/>
            <person name="Kaul R."/>
            <person name="Swarbreck D."/>
            <person name="Dunham A."/>
            <person name="Scott C.E."/>
            <person name="Howe K.L."/>
            <person name="Woodfine K."/>
            <person name="Spencer C.C.A."/>
            <person name="Jones M.C."/>
            <person name="Gillson C."/>
            <person name="Searle S."/>
            <person name="Zhou Y."/>
            <person name="Kokocinski F."/>
            <person name="McDonald L."/>
            <person name="Evans R."/>
            <person name="Phillips K."/>
            <person name="Atkinson A."/>
            <person name="Cooper R."/>
            <person name="Jones C."/>
            <person name="Hall R.E."/>
            <person name="Andrews T.D."/>
            <person name="Lloyd C."/>
            <person name="Ainscough R."/>
            <person name="Almeida J.P."/>
            <person name="Ambrose K.D."/>
            <person name="Anderson F."/>
            <person name="Andrew R.W."/>
            <person name="Ashwell R.I.S."/>
            <person name="Aubin K."/>
            <person name="Babbage A.K."/>
            <person name="Bagguley C.L."/>
            <person name="Bailey J."/>
            <person name="Beasley H."/>
            <person name="Bethel G."/>
            <person name="Bird C.P."/>
            <person name="Bray-Allen S."/>
            <person name="Brown J.Y."/>
            <person name="Brown A.J."/>
            <person name="Buckley D."/>
            <person name="Burton J."/>
            <person name="Bye J."/>
            <person name="Carder C."/>
            <person name="Chapman J.C."/>
            <person name="Clark S.Y."/>
            <person name="Clarke G."/>
            <person name="Clee C."/>
            <person name="Cobley V."/>
            <person name="Collier R.E."/>
            <person name="Corby N."/>
            <person name="Coville G.J."/>
            <person name="Davies J."/>
            <person name="Deadman R."/>
            <person name="Dunn M."/>
            <person name="Earthrowl M."/>
            <person name="Ellington A.G."/>
            <person name="Errington H."/>
            <person name="Frankish A."/>
            <person name="Frankland J."/>
            <person name="French L."/>
            <person name="Garner P."/>
            <person name="Garnett J."/>
            <person name="Gay L."/>
            <person name="Ghori M.R.J."/>
            <person name="Gibson R."/>
            <person name="Gilby L.M."/>
            <person name="Gillett W."/>
            <person name="Glithero R.J."/>
            <person name="Grafham D.V."/>
            <person name="Griffiths C."/>
            <person name="Griffiths-Jones S."/>
            <person name="Grocock R."/>
            <person name="Hammond S."/>
            <person name="Harrison E.S.I."/>
            <person name="Hart E."/>
            <person name="Haugen E."/>
            <person name="Heath P.D."/>
            <person name="Holmes S."/>
            <person name="Holt K."/>
            <person name="Howden P.J."/>
            <person name="Hunt A.R."/>
            <person name="Hunt S.E."/>
            <person name="Hunter G."/>
            <person name="Isherwood J."/>
            <person name="James R."/>
            <person name="Johnson C."/>
            <person name="Johnson D."/>
            <person name="Joy A."/>
            <person name="Kay M."/>
            <person name="Kershaw J.K."/>
            <person name="Kibukawa M."/>
            <person name="Kimberley A.M."/>
            <person name="King A."/>
            <person name="Knights A.J."/>
            <person name="Lad H."/>
            <person name="Laird G."/>
            <person name="Lawlor S."/>
            <person name="Leongamornlert D.A."/>
            <person name="Lloyd D.M."/>
            <person name="Loveland J."/>
            <person name="Lovell J."/>
            <person name="Lush M.J."/>
            <person name="Lyne R."/>
            <person name="Martin S."/>
            <person name="Mashreghi-Mohammadi M."/>
            <person name="Matthews L."/>
            <person name="Matthews N.S.W."/>
            <person name="McLaren S."/>
            <person name="Milne S."/>
            <person name="Mistry S."/>
            <person name="Moore M.J.F."/>
            <person name="Nickerson T."/>
            <person name="O'Dell C.N."/>
            <person name="Oliver K."/>
            <person name="Palmeiri A."/>
            <person name="Palmer S.A."/>
            <person name="Parker A."/>
            <person name="Patel D."/>
            <person name="Pearce A.V."/>
            <person name="Peck A.I."/>
            <person name="Pelan S."/>
            <person name="Phelps K."/>
            <person name="Phillimore B.J."/>
            <person name="Plumb R."/>
            <person name="Rajan J."/>
            <person name="Raymond C."/>
            <person name="Rouse G."/>
            <person name="Saenphimmachak C."/>
            <person name="Sehra H.K."/>
            <person name="Sheridan E."/>
            <person name="Shownkeen R."/>
            <person name="Sims S."/>
            <person name="Skuce C.D."/>
            <person name="Smith M."/>
            <person name="Steward C."/>
            <person name="Subramanian S."/>
            <person name="Sycamore N."/>
            <person name="Tracey A."/>
            <person name="Tromans A."/>
            <person name="Van Helmond Z."/>
            <person name="Wall M."/>
            <person name="Wallis J.M."/>
            <person name="White S."/>
            <person name="Whitehead S.L."/>
            <person name="Wilkinson J.E."/>
            <person name="Willey D.L."/>
            <person name="Williams H."/>
            <person name="Wilming L."/>
            <person name="Wray P.W."/>
            <person name="Wu Z."/>
            <person name="Coulson A."/>
            <person name="Vaudin M."/>
            <person name="Sulston J.E."/>
            <person name="Durbin R.M."/>
            <person name="Hubbard T."/>
            <person name="Wooster R."/>
            <person name="Dunham I."/>
            <person name="Carter N.P."/>
            <person name="McVean G."/>
            <person name="Ross M.T."/>
            <person name="Harrow J."/>
            <person name="Olson M.V."/>
            <person name="Beck S."/>
            <person name="Rogers J."/>
            <person name="Bentley D.R."/>
        </authorList>
    </citation>
    <scope>NUCLEOTIDE SEQUENCE [LARGE SCALE GENOMIC DNA]</scope>
</reference>
<reference key="5">
    <citation type="submission" date="2005-07" db="EMBL/GenBank/DDBJ databases">
        <authorList>
            <person name="Mural R.J."/>
            <person name="Istrail S."/>
            <person name="Sutton G.G."/>
            <person name="Florea L."/>
            <person name="Halpern A.L."/>
            <person name="Mobarry C.M."/>
            <person name="Lippert R."/>
            <person name="Walenz B."/>
            <person name="Shatkay H."/>
            <person name="Dew I."/>
            <person name="Miller J.R."/>
            <person name="Flanigan M.J."/>
            <person name="Edwards N.J."/>
            <person name="Bolanos R."/>
            <person name="Fasulo D."/>
            <person name="Halldorsson B.V."/>
            <person name="Hannenhalli S."/>
            <person name="Turner R."/>
            <person name="Yooseph S."/>
            <person name="Lu F."/>
            <person name="Nusskern D.R."/>
            <person name="Shue B.C."/>
            <person name="Zheng X.H."/>
            <person name="Zhong F."/>
            <person name="Delcher A.L."/>
            <person name="Huson D.H."/>
            <person name="Kravitz S.A."/>
            <person name="Mouchard L."/>
            <person name="Reinert K."/>
            <person name="Remington K.A."/>
            <person name="Clark A.G."/>
            <person name="Waterman M.S."/>
            <person name="Eichler E.E."/>
            <person name="Adams M.D."/>
            <person name="Hunkapiller M.W."/>
            <person name="Myers E.W."/>
            <person name="Venter J.C."/>
        </authorList>
    </citation>
    <scope>NUCLEOTIDE SEQUENCE [LARGE SCALE GENOMIC DNA]</scope>
</reference>
<reference key="6">
    <citation type="journal article" date="2004" name="Genome Res.">
        <title>The status, quality, and expansion of the NIH full-length cDNA project: the Mammalian Gene Collection (MGC).</title>
        <authorList>
            <consortium name="The MGC Project Team"/>
        </authorList>
    </citation>
    <scope>NUCLEOTIDE SEQUENCE [LARGE SCALE MRNA]</scope>
    <source>
        <tissue>Kidney</tissue>
    </source>
</reference>
<reference key="7">
    <citation type="journal article" date="2008" name="J. Biol. Chem.">
        <title>Diversity in tissue expression, substrate binding, and SCF complex formation for a lectin family of ubiquitin ligases.</title>
        <authorList>
            <person name="Glenn K.A."/>
            <person name="Nelson R.F."/>
            <person name="Wen H.M."/>
            <person name="Mallinger A.J."/>
            <person name="Paulson H.L."/>
        </authorList>
    </citation>
    <scope>FUNCTION</scope>
    <scope>SUGAR-BINDING</scope>
    <scope>INTERACTION WITH CUL1</scope>
    <scope>MUTAGENESIS OF 241-TYR-TRP-242</scope>
</reference>
<reference key="8">
    <citation type="journal article" date="2009" name="Mol. Cell">
        <title>The F box protein Fbx6 regulates Chk1 stability and cellular sensitivity to replication stress.</title>
        <authorList>
            <person name="Zhang Y.-W."/>
            <person name="Brognard J."/>
            <person name="Coughlin C."/>
            <person name="You Z."/>
            <person name="Dolled-Filhart M."/>
            <person name="Aslanian A."/>
            <person name="Manning G."/>
            <person name="Abraham R.T."/>
            <person name="Hunter T."/>
        </authorList>
    </citation>
    <scope>FUNCTION</scope>
    <scope>SUBCELLULAR LOCATION</scope>
    <scope>IDENTIFICATION IN A SCF PROTEIN LIGASE COMPLEX</scope>
    <scope>INTERACTION WITH CHEK1</scope>
</reference>
<reference key="9">
    <citation type="journal article" date="2011" name="BMC Syst. Biol.">
        <title>Initial characterization of the human central proteome.</title>
        <authorList>
            <person name="Burkard T.R."/>
            <person name="Planyavsky M."/>
            <person name="Kaupe I."/>
            <person name="Breitwieser F.P."/>
            <person name="Buerckstuemmer T."/>
            <person name="Bennett K.L."/>
            <person name="Superti-Furga G."/>
            <person name="Colinge J."/>
        </authorList>
    </citation>
    <scope>IDENTIFICATION BY MASS SPECTROMETRY [LARGE SCALE ANALYSIS]</scope>
</reference>
<reference key="10">
    <citation type="journal article" date="2013" name="J. Proteome Res.">
        <title>Toward a comprehensive characterization of a human cancer cell phosphoproteome.</title>
        <authorList>
            <person name="Zhou H."/>
            <person name="Di Palma S."/>
            <person name="Preisinger C."/>
            <person name="Peng M."/>
            <person name="Polat A.N."/>
            <person name="Heck A.J."/>
            <person name="Mohammed S."/>
        </authorList>
    </citation>
    <scope>PHOSPHORYLATION [LARGE SCALE ANALYSIS] AT SER-258 AND SER-284</scope>
    <scope>IDENTIFICATION BY MASS SPECTROMETRY [LARGE SCALE ANALYSIS]</scope>
    <source>
        <tissue>Erythroleukemia</tissue>
    </source>
</reference>
<dbReference type="EMBL" id="AF129536">
    <property type="protein sequence ID" value="AAF04470.1"/>
    <property type="status" value="ALT_INIT"/>
    <property type="molecule type" value="mRNA"/>
</dbReference>
<dbReference type="EMBL" id="AF233223">
    <property type="protein sequence ID" value="AAF67153.1"/>
    <property type="molecule type" value="mRNA"/>
</dbReference>
<dbReference type="EMBL" id="AK314989">
    <property type="protein sequence ID" value="BAG37485.1"/>
    <property type="molecule type" value="mRNA"/>
</dbReference>
<dbReference type="EMBL" id="AL031731">
    <property type="status" value="NOT_ANNOTATED_CDS"/>
    <property type="molecule type" value="Genomic_DNA"/>
</dbReference>
<dbReference type="EMBL" id="CH471130">
    <property type="protein sequence ID" value="EAW71696.1"/>
    <property type="molecule type" value="Genomic_DNA"/>
</dbReference>
<dbReference type="EMBL" id="BC020880">
    <property type="protein sequence ID" value="AAH20880.1"/>
    <property type="molecule type" value="mRNA"/>
</dbReference>
<dbReference type="CCDS" id="CCDS133.1"/>
<dbReference type="RefSeq" id="NP_060908.1">
    <property type="nucleotide sequence ID" value="NM_018438.6"/>
</dbReference>
<dbReference type="RefSeq" id="XP_005263505.1">
    <property type="nucleotide sequence ID" value="XM_005263448.6"/>
</dbReference>
<dbReference type="RefSeq" id="XP_005263506.1">
    <property type="nucleotide sequence ID" value="XM_005263449.6"/>
</dbReference>
<dbReference type="RefSeq" id="XP_005263508.1">
    <property type="nucleotide sequence ID" value="XM_005263451.6"/>
</dbReference>
<dbReference type="RefSeq" id="XP_006710634.1">
    <property type="nucleotide sequence ID" value="XM_006710571.3"/>
</dbReference>
<dbReference type="RefSeq" id="XP_011539534.1">
    <property type="nucleotide sequence ID" value="XM_011541232.4"/>
</dbReference>
<dbReference type="RefSeq" id="XP_016856496.1">
    <property type="nucleotide sequence ID" value="XM_017001007.1"/>
</dbReference>
<dbReference type="RefSeq" id="XP_054191929.1">
    <property type="nucleotide sequence ID" value="XM_054335954.1"/>
</dbReference>
<dbReference type="RefSeq" id="XP_054191930.1">
    <property type="nucleotide sequence ID" value="XM_054335955.1"/>
</dbReference>
<dbReference type="RefSeq" id="XP_054191931.1">
    <property type="nucleotide sequence ID" value="XM_054335956.1"/>
</dbReference>
<dbReference type="RefSeq" id="XP_054191932.1">
    <property type="nucleotide sequence ID" value="XM_054335957.1"/>
</dbReference>
<dbReference type="SMR" id="Q9NRD1"/>
<dbReference type="BioGRID" id="117654">
    <property type="interactions" value="730"/>
</dbReference>
<dbReference type="ComplexPortal" id="CPX-7905">
    <property type="entry name" value="SCF E3 ubiquitin ligase complex, FBXO6 variant"/>
</dbReference>
<dbReference type="CORUM" id="Q9NRD1"/>
<dbReference type="FunCoup" id="Q9NRD1">
    <property type="interactions" value="671"/>
</dbReference>
<dbReference type="IntAct" id="Q9NRD1">
    <property type="interactions" value="99"/>
</dbReference>
<dbReference type="MINT" id="Q9NRD1"/>
<dbReference type="STRING" id="9606.ENSP00000365944"/>
<dbReference type="iPTMnet" id="Q9NRD1"/>
<dbReference type="PhosphoSitePlus" id="Q9NRD1"/>
<dbReference type="BioMuta" id="FBXO6"/>
<dbReference type="DMDM" id="24636846"/>
<dbReference type="jPOST" id="Q9NRD1"/>
<dbReference type="MassIVE" id="Q9NRD1"/>
<dbReference type="PaxDb" id="9606-ENSP00000365944"/>
<dbReference type="PeptideAtlas" id="Q9NRD1"/>
<dbReference type="ProteomicsDB" id="82338"/>
<dbReference type="Pumba" id="Q9NRD1"/>
<dbReference type="Antibodypedia" id="28155">
    <property type="antibodies" value="241 antibodies from 28 providers"/>
</dbReference>
<dbReference type="DNASU" id="26270"/>
<dbReference type="Ensembl" id="ENST00000376753.9">
    <property type="protein sequence ID" value="ENSP00000365944.4"/>
    <property type="gene ID" value="ENSG00000116663.11"/>
</dbReference>
<dbReference type="GeneID" id="26270"/>
<dbReference type="KEGG" id="hsa:26270"/>
<dbReference type="MANE-Select" id="ENST00000376753.9">
    <property type="protein sequence ID" value="ENSP00000365944.4"/>
    <property type="RefSeq nucleotide sequence ID" value="NM_018438.6"/>
    <property type="RefSeq protein sequence ID" value="NP_060908.1"/>
</dbReference>
<dbReference type="UCSC" id="uc001aso.4">
    <property type="organism name" value="human"/>
</dbReference>
<dbReference type="AGR" id="HGNC:13585"/>
<dbReference type="CTD" id="26270"/>
<dbReference type="DisGeNET" id="26270"/>
<dbReference type="GeneCards" id="FBXO6"/>
<dbReference type="HGNC" id="HGNC:13585">
    <property type="gene designation" value="FBXO6"/>
</dbReference>
<dbReference type="HPA" id="ENSG00000116663">
    <property type="expression patterns" value="Low tissue specificity"/>
</dbReference>
<dbReference type="MIM" id="605647">
    <property type="type" value="gene"/>
</dbReference>
<dbReference type="neXtProt" id="NX_Q9NRD1"/>
<dbReference type="OpenTargets" id="ENSG00000116663"/>
<dbReference type="PharmGKB" id="PA28046"/>
<dbReference type="VEuPathDB" id="HostDB:ENSG00000116663"/>
<dbReference type="eggNOG" id="ENOG502RZA6">
    <property type="taxonomic scope" value="Eukaryota"/>
</dbReference>
<dbReference type="GeneTree" id="ENSGT00940000159980"/>
<dbReference type="HOGENOM" id="CLU_068548_0_0_1"/>
<dbReference type="InParanoid" id="Q9NRD1"/>
<dbReference type="OMA" id="HIFFQHG"/>
<dbReference type="OrthoDB" id="1107553at2759"/>
<dbReference type="PAN-GO" id="Q9NRD1">
    <property type="GO annotations" value="7 GO annotations based on evolutionary models"/>
</dbReference>
<dbReference type="PhylomeDB" id="Q9NRD1"/>
<dbReference type="TreeFam" id="TF320527"/>
<dbReference type="PathwayCommons" id="Q9NRD1"/>
<dbReference type="Reactome" id="R-HSA-390471">
    <property type="pathway name" value="Association of TriC/CCT with target proteins during biosynthesis"/>
</dbReference>
<dbReference type="Reactome" id="R-HSA-8951664">
    <property type="pathway name" value="Neddylation"/>
</dbReference>
<dbReference type="Reactome" id="R-HSA-983168">
    <property type="pathway name" value="Antigen processing: Ubiquitination &amp; Proteasome degradation"/>
</dbReference>
<dbReference type="SignaLink" id="Q9NRD1"/>
<dbReference type="SIGNOR" id="Q9NRD1"/>
<dbReference type="UniPathway" id="UPA00143"/>
<dbReference type="BioGRID-ORCS" id="26270">
    <property type="hits" value="10 hits in 1213 CRISPR screens"/>
</dbReference>
<dbReference type="ChiTaRS" id="FBXO6">
    <property type="organism name" value="human"/>
</dbReference>
<dbReference type="GeneWiki" id="FBXO6"/>
<dbReference type="GenomeRNAi" id="26270"/>
<dbReference type="Pharos" id="Q9NRD1">
    <property type="development level" value="Tbio"/>
</dbReference>
<dbReference type="PRO" id="PR:Q9NRD1"/>
<dbReference type="Proteomes" id="UP000005640">
    <property type="component" value="Chromosome 1"/>
</dbReference>
<dbReference type="RNAct" id="Q9NRD1">
    <property type="molecule type" value="protein"/>
</dbReference>
<dbReference type="Bgee" id="ENSG00000116663">
    <property type="expression patterns" value="Expressed in granulocyte and 141 other cell types or tissues"/>
</dbReference>
<dbReference type="ExpressionAtlas" id="Q9NRD1">
    <property type="expression patterns" value="baseline and differential"/>
</dbReference>
<dbReference type="GO" id="GO:0005737">
    <property type="term" value="C:cytoplasm"/>
    <property type="evidence" value="ECO:0000314"/>
    <property type="project" value="UniProtKB"/>
</dbReference>
<dbReference type="GO" id="GO:0005829">
    <property type="term" value="C:cytosol"/>
    <property type="evidence" value="ECO:0000304"/>
    <property type="project" value="Reactome"/>
</dbReference>
<dbReference type="GO" id="GO:0044322">
    <property type="term" value="C:endoplasmic reticulum quality control compartment"/>
    <property type="evidence" value="ECO:0000318"/>
    <property type="project" value="GO_Central"/>
</dbReference>
<dbReference type="GO" id="GO:0019005">
    <property type="term" value="C:SCF ubiquitin ligase complex"/>
    <property type="evidence" value="ECO:0000314"/>
    <property type="project" value="UniProtKB"/>
</dbReference>
<dbReference type="GO" id="GO:0030246">
    <property type="term" value="F:carbohydrate binding"/>
    <property type="evidence" value="ECO:0007669"/>
    <property type="project" value="Ensembl"/>
</dbReference>
<dbReference type="GO" id="GO:0061630">
    <property type="term" value="F:ubiquitin protein ligase activity"/>
    <property type="evidence" value="ECO:0007669"/>
    <property type="project" value="Ensembl"/>
</dbReference>
<dbReference type="GO" id="GO:0000077">
    <property type="term" value="P:DNA damage checkpoint signaling"/>
    <property type="evidence" value="ECO:0000304"/>
    <property type="project" value="UniProtKB"/>
</dbReference>
<dbReference type="GO" id="GO:0006281">
    <property type="term" value="P:DNA repair"/>
    <property type="evidence" value="ECO:0000304"/>
    <property type="project" value="UniProtKB"/>
</dbReference>
<dbReference type="GO" id="GO:0036503">
    <property type="term" value="P:ERAD pathway"/>
    <property type="evidence" value="ECO:0000250"/>
    <property type="project" value="UniProtKB"/>
</dbReference>
<dbReference type="GO" id="GO:0006516">
    <property type="term" value="P:glycoprotein catabolic process"/>
    <property type="evidence" value="ECO:0000318"/>
    <property type="project" value="GO_Central"/>
</dbReference>
<dbReference type="GO" id="GO:0016567">
    <property type="term" value="P:protein ubiquitination"/>
    <property type="evidence" value="ECO:0007669"/>
    <property type="project" value="UniProtKB-UniPathway"/>
</dbReference>
<dbReference type="GO" id="GO:0006508">
    <property type="term" value="P:proteolysis"/>
    <property type="evidence" value="ECO:0000304"/>
    <property type="project" value="ProtInc"/>
</dbReference>
<dbReference type="GO" id="GO:0006986">
    <property type="term" value="P:response to unfolded protein"/>
    <property type="evidence" value="ECO:0007669"/>
    <property type="project" value="UniProtKB-KW"/>
</dbReference>
<dbReference type="GO" id="GO:0031146">
    <property type="term" value="P:SCF-dependent proteasomal ubiquitin-dependent protein catabolic process"/>
    <property type="evidence" value="ECO:0000314"/>
    <property type="project" value="UniProtKB"/>
</dbReference>
<dbReference type="CDD" id="cd22168">
    <property type="entry name" value="F-box_FBXO6-like"/>
    <property type="match status" value="1"/>
</dbReference>
<dbReference type="FunFam" id="2.60.120.260:FF:000012">
    <property type="entry name" value="F-box only protein 2"/>
    <property type="match status" value="1"/>
</dbReference>
<dbReference type="FunFam" id="1.20.1280.50:FF:000002">
    <property type="entry name" value="F-box only protein 44"/>
    <property type="match status" value="1"/>
</dbReference>
<dbReference type="Gene3D" id="1.20.1280.50">
    <property type="match status" value="1"/>
</dbReference>
<dbReference type="Gene3D" id="2.60.120.260">
    <property type="entry name" value="Galactose-binding domain-like"/>
    <property type="match status" value="1"/>
</dbReference>
<dbReference type="InterPro" id="IPR007397">
    <property type="entry name" value="F-box-assoc_dom"/>
</dbReference>
<dbReference type="InterPro" id="IPR036047">
    <property type="entry name" value="F-box-like_dom_sf"/>
</dbReference>
<dbReference type="InterPro" id="IPR001810">
    <property type="entry name" value="F-box_dom"/>
</dbReference>
<dbReference type="InterPro" id="IPR039752">
    <property type="entry name" value="F-box_only"/>
</dbReference>
<dbReference type="InterPro" id="IPR008979">
    <property type="entry name" value="Galactose-bd-like_sf"/>
</dbReference>
<dbReference type="PANTHER" id="PTHR12125:SF12">
    <property type="entry name" value="F-BOX ONLY PROTEIN 6"/>
    <property type="match status" value="1"/>
</dbReference>
<dbReference type="PANTHER" id="PTHR12125">
    <property type="entry name" value="F-BOX ONLY PROTEIN 6-LIKE PROTEIN"/>
    <property type="match status" value="1"/>
</dbReference>
<dbReference type="Pfam" id="PF12937">
    <property type="entry name" value="F-box-like"/>
    <property type="match status" value="1"/>
</dbReference>
<dbReference type="Pfam" id="PF04300">
    <property type="entry name" value="FBA"/>
    <property type="match status" value="1"/>
</dbReference>
<dbReference type="SMART" id="SM01198">
    <property type="entry name" value="FBA"/>
    <property type="match status" value="1"/>
</dbReference>
<dbReference type="SMART" id="SM00256">
    <property type="entry name" value="FBOX"/>
    <property type="match status" value="1"/>
</dbReference>
<dbReference type="SUPFAM" id="SSF81383">
    <property type="entry name" value="F-box domain"/>
    <property type="match status" value="1"/>
</dbReference>
<dbReference type="SUPFAM" id="SSF49785">
    <property type="entry name" value="Galactose-binding domain-like"/>
    <property type="match status" value="1"/>
</dbReference>
<dbReference type="PROSITE" id="PS51114">
    <property type="entry name" value="FBA"/>
    <property type="match status" value="1"/>
</dbReference>
<dbReference type="PROSITE" id="PS50181">
    <property type="entry name" value="FBOX"/>
    <property type="match status" value="1"/>
</dbReference>
<evidence type="ECO:0000250" key="1"/>
<evidence type="ECO:0000255" key="2">
    <source>
        <dbReference type="PROSITE-ProRule" id="PRU00080"/>
    </source>
</evidence>
<evidence type="ECO:0000255" key="3">
    <source>
        <dbReference type="PROSITE-ProRule" id="PRU00482"/>
    </source>
</evidence>
<evidence type="ECO:0000256" key="4">
    <source>
        <dbReference type="SAM" id="MobiDB-lite"/>
    </source>
</evidence>
<evidence type="ECO:0000269" key="5">
    <source>
    </source>
</evidence>
<evidence type="ECO:0000269" key="6">
    <source>
    </source>
</evidence>
<evidence type="ECO:0000305" key="7"/>
<evidence type="ECO:0007744" key="8">
    <source>
    </source>
</evidence>
<proteinExistence type="evidence at protein level"/>
<gene>
    <name type="primary">FBXO6</name>
    <name type="synonym">FBG2</name>
    <name type="synonym">FBS2</name>
    <name type="synonym">FBX6</name>
</gene>
<protein>
    <recommendedName>
        <fullName>F-box only protein 6</fullName>
    </recommendedName>
    <alternativeName>
        <fullName>F-box protein that recognizes sugar chains 2</fullName>
    </alternativeName>
    <alternativeName>
        <fullName>F-box/G-domain protein 2</fullName>
    </alternativeName>
</protein>
<keyword id="KW-0963">Cytoplasm</keyword>
<keyword id="KW-0227">DNA damage</keyword>
<keyword id="KW-0234">DNA repair</keyword>
<keyword id="KW-0597">Phosphoprotein</keyword>
<keyword id="KW-1267">Proteomics identification</keyword>
<keyword id="KW-1185">Reference proteome</keyword>
<keyword id="KW-0833">Ubl conjugation pathway</keyword>
<keyword id="KW-0834">Unfolded protein response</keyword>
<accession>Q9NRD1</accession>
<accession>B1AK42</accession>
<accession>B2RC88</accession>
<accession>Q9UKT3</accession>
<name>FBX6_HUMAN</name>
<organism>
    <name type="scientific">Homo sapiens</name>
    <name type="common">Human</name>
    <dbReference type="NCBI Taxonomy" id="9606"/>
    <lineage>
        <taxon>Eukaryota</taxon>
        <taxon>Metazoa</taxon>
        <taxon>Chordata</taxon>
        <taxon>Craniata</taxon>
        <taxon>Vertebrata</taxon>
        <taxon>Euteleostomi</taxon>
        <taxon>Mammalia</taxon>
        <taxon>Eutheria</taxon>
        <taxon>Euarchontoglires</taxon>
        <taxon>Primates</taxon>
        <taxon>Haplorrhini</taxon>
        <taxon>Catarrhini</taxon>
        <taxon>Hominidae</taxon>
        <taxon>Homo</taxon>
    </lineage>
</organism>
<comment type="function">
    <text evidence="5 6">Substrate-recognition component of some SCF (SKP1-CUL1-F-box protein)-type E3 ubiquitin ligase complexes. Involved in endoplasmic reticulum-associated degradation pathway (ERAD) for misfolded lumenal proteins by recognizing and binding sugar chains on unfolded glycoproteins that are retrotranslocated into the cytosol and promoting their ubiquitination and subsequent degradation. Able to recognize and bind denatured glycoproteins, which are modified with not only high-mannose but also complex-type oligosaccharides. Also recognizes sulfated glycans. Also involved in DNA damage response by specifically recognizing activated CHEK1 (phosphorylated on 'Ser-345'), promoting its ubiquitination and degradation. Ubiquitination of CHEK1 is required to ensure that activated CHEK1 does not accumulate as cells progress through S phase, or when replication forks encounter transient impediments during normal DNA replication.</text>
</comment>
<comment type="pathway">
    <text>Protein modification; protein ubiquitination.</text>
</comment>
<comment type="subunit">
    <text evidence="1 5 6">Interacts with VCP (By similarity). Part of a SCF (SKP1-cullin-F-box) protein ligase complex. Interacts with CHEK1 and CUL1.</text>
</comment>
<comment type="interaction">
    <interactant intactId="EBI-3938499">
        <id>Q9NRD1</id>
    </interactant>
    <interactant intactId="EBI-359390">
        <id>Q13616</id>
        <label>CUL1</label>
    </interactant>
    <organismsDiffer>false</organismsDiffer>
    <experiments>5</experiments>
</comment>
<comment type="interaction">
    <interactant intactId="EBI-3938499">
        <id>Q9NRD1</id>
    </interactant>
    <interactant intactId="EBI-354956">
        <id>Q08380</id>
        <label>LGALS3BP</label>
    </interactant>
    <organismsDiffer>false</organismsDiffer>
    <experiments>2</experiments>
</comment>
<comment type="interaction">
    <interactant intactId="EBI-3938499">
        <id>Q9NRD1</id>
    </interactant>
    <interactant intactId="EBI-307486">
        <id>P63208</id>
        <label>SKP1</label>
    </interactant>
    <organismsDiffer>false</organismsDiffer>
    <experiments>9</experiments>
</comment>
<comment type="subcellular location">
    <subcellularLocation>
        <location evidence="6">Cytoplasm</location>
    </subcellularLocation>
</comment>
<comment type="sequence caution" evidence="7">
    <conflict type="erroneous initiation">
        <sequence resource="EMBL-CDS" id="AAF04470"/>
    </conflict>
</comment>
<comment type="online information" name="Functional Glycomics Gateway - Glycan Binding">
    <link uri="http://www.functionalglycomics.org/glycomics/GBPServlet?&amp;operationType=view&amp;cbpId=cbp_hum_other_821"/>
    <text>hFBG2</text>
</comment>